<reference key="1">
    <citation type="journal article" date="2001" name="Mol. Genet. Genomics">
        <title>Genetic and molecular features of Su(P), a gene that interacts with ref(2)P in male fertility of Drosophila melanogaster.</title>
        <authorList>
            <person name="Bichon A."/>
            <person name="Boukhatem N."/>
            <person name="Gay P."/>
            <person name="Dru P."/>
            <person name="Terzian H."/>
            <person name="Petitjean A.-M."/>
            <person name="Lemeunier F."/>
            <person name="Contamine D."/>
        </authorList>
    </citation>
    <scope>NUCLEOTIDE SEQUENCE [GENOMIC DNA]</scope>
</reference>
<reference key="2">
    <citation type="journal article" date="2007" name="Nature">
        <title>Evolution of genes and genomes on the Drosophila phylogeny.</title>
        <authorList>
            <consortium name="Drosophila 12 genomes consortium"/>
        </authorList>
    </citation>
    <scope>NUCLEOTIDE SEQUENCE [LARGE SCALE GENOMIC DNA]</scope>
</reference>
<gene>
    <name type="primary">anon-73B1</name>
    <name type="synonym">anon73B1</name>
    <name type="ORF">GD14652</name>
</gene>
<proteinExistence type="inferred from homology"/>
<organism>
    <name type="scientific">Drosophila simulans</name>
    <name type="common">Fruit fly</name>
    <dbReference type="NCBI Taxonomy" id="7240"/>
    <lineage>
        <taxon>Eukaryota</taxon>
        <taxon>Metazoa</taxon>
        <taxon>Ecdysozoa</taxon>
        <taxon>Arthropoda</taxon>
        <taxon>Hexapoda</taxon>
        <taxon>Insecta</taxon>
        <taxon>Pterygota</taxon>
        <taxon>Neoptera</taxon>
        <taxon>Endopterygota</taxon>
        <taxon>Diptera</taxon>
        <taxon>Brachycera</taxon>
        <taxon>Muscomorpha</taxon>
        <taxon>Ephydroidea</taxon>
        <taxon>Drosophilidae</taxon>
        <taxon>Drosophila</taxon>
        <taxon>Sophophora</taxon>
    </lineage>
</organism>
<sequence>MSASADSLAAAASLDKYGDEDIFSLLIRYGLYVGALFQFVCISAAVLMENNPDSQSNPETGEVTEREGEPVRTRLHKIRKLEKKKRR</sequence>
<dbReference type="EMBL" id="AJ250308">
    <property type="protein sequence ID" value="CAB58354.1"/>
    <property type="molecule type" value="Genomic_DNA"/>
</dbReference>
<dbReference type="EMBL" id="CM000363">
    <property type="protein sequence ID" value="EDX10755.1"/>
    <property type="molecule type" value="Genomic_DNA"/>
</dbReference>
<dbReference type="EnsemblMetazoa" id="FBtr0214562">
    <property type="protein sequence ID" value="FBpp0213054"/>
    <property type="gene ID" value="FBgn0028445"/>
</dbReference>
<dbReference type="EnsemblMetazoa" id="XM_002085134.4">
    <property type="protein sequence ID" value="XP_002085170.1"/>
    <property type="gene ID" value="LOC6738360"/>
</dbReference>
<dbReference type="GeneID" id="6738360"/>
<dbReference type="HOGENOM" id="CLU_189363_0_0_1"/>
<dbReference type="OMA" id="FQMVCLA"/>
<dbReference type="OrthoDB" id="10040809at2759"/>
<dbReference type="PhylomeDB" id="Q9U5V3"/>
<dbReference type="Proteomes" id="UP000000304">
    <property type="component" value="Chromosome 3L"/>
</dbReference>
<dbReference type="Bgee" id="FBgn0028445">
    <property type="expression patterns" value="Expressed in embryo and 3 other cell types or tissues"/>
</dbReference>
<dbReference type="GO" id="GO:0016020">
    <property type="term" value="C:membrane"/>
    <property type="evidence" value="ECO:0007669"/>
    <property type="project" value="UniProtKB-SubCell"/>
</dbReference>
<dbReference type="InterPro" id="IPR009621">
    <property type="entry name" value="UPF0239"/>
</dbReference>
<dbReference type="PANTHER" id="PTHR14409">
    <property type="entry name" value="MANNOSIDASE, BETA A, LYSOSOMAL-LIKE, MANBAL PROTEIN"/>
    <property type="match status" value="1"/>
</dbReference>
<dbReference type="PANTHER" id="PTHR14409:SF0">
    <property type="entry name" value="PROTEIN MANBAL"/>
    <property type="match status" value="1"/>
</dbReference>
<dbReference type="Pfam" id="PF06783">
    <property type="entry name" value="UPF0239"/>
    <property type="match status" value="1"/>
</dbReference>
<feature type="chain" id="PRO_0000194183" description="Protein anon-73B1">
    <location>
        <begin position="1"/>
        <end position="87"/>
    </location>
</feature>
<feature type="transmembrane region" description="Helical" evidence="1">
    <location>
        <begin position="25"/>
        <end position="47"/>
    </location>
</feature>
<feature type="region of interest" description="Disordered" evidence="2">
    <location>
        <begin position="50"/>
        <end position="87"/>
    </location>
</feature>
<feature type="compositionally biased region" description="Basic and acidic residues" evidence="2">
    <location>
        <begin position="63"/>
        <end position="72"/>
    </location>
</feature>
<feature type="compositionally biased region" description="Basic residues" evidence="2">
    <location>
        <begin position="73"/>
        <end position="87"/>
    </location>
</feature>
<protein>
    <recommendedName>
        <fullName>Protein anon-73B1</fullName>
    </recommendedName>
</protein>
<evidence type="ECO:0000255" key="1"/>
<evidence type="ECO:0000256" key="2">
    <source>
        <dbReference type="SAM" id="MobiDB-lite"/>
    </source>
</evidence>
<evidence type="ECO:0000305" key="3"/>
<comment type="subcellular location">
    <subcellularLocation>
        <location evidence="3">Membrane</location>
        <topology evidence="3">Single-pass membrane protein</topology>
    </subcellularLocation>
</comment>
<comment type="similarity">
    <text evidence="3">Belongs to the UPF0239 family.</text>
</comment>
<name>U239_DROSI</name>
<accession>Q9U5V3</accession>
<accession>B4QMW3</accession>
<keyword id="KW-0472">Membrane</keyword>
<keyword id="KW-1185">Reference proteome</keyword>
<keyword id="KW-0812">Transmembrane</keyword>
<keyword id="KW-1133">Transmembrane helix</keyword>